<protein>
    <recommendedName>
        <fullName evidence="1">Phosphoheptose isomerase</fullName>
        <ecNumber evidence="1">5.3.1.28</ecNumber>
    </recommendedName>
    <alternativeName>
        <fullName evidence="1">Sedoheptulose 7-phosphate isomerase</fullName>
    </alternativeName>
</protein>
<sequence>MIEEIKSQIHSHQKVMESIGQELSPKIAAVVELLADALGNGKKLLVMGNGGSAADAQHLVAELVGRFKMERRGLPAIALTTDTSILTAIGNDYGFENIFSRQIEALARPGDVVVGISTSGTSKNVYKALLVADELGCRTIGLLGRDGGTIAEIVDVPITVPCDDTPRVQEGHITIIHILCDLLEKRLFGERR</sequence>
<reference key="1">
    <citation type="submission" date="2009-01" db="EMBL/GenBank/DDBJ databases">
        <title>Complete sequence of Geobacter sp. FRC-32.</title>
        <authorList>
            <consortium name="US DOE Joint Genome Institute"/>
            <person name="Lucas S."/>
            <person name="Copeland A."/>
            <person name="Lapidus A."/>
            <person name="Glavina del Rio T."/>
            <person name="Dalin E."/>
            <person name="Tice H."/>
            <person name="Bruce D."/>
            <person name="Goodwin L."/>
            <person name="Pitluck S."/>
            <person name="Saunders E."/>
            <person name="Brettin T."/>
            <person name="Detter J.C."/>
            <person name="Han C."/>
            <person name="Larimer F."/>
            <person name="Land M."/>
            <person name="Hauser L."/>
            <person name="Kyrpides N."/>
            <person name="Ovchinnikova G."/>
            <person name="Kostka J."/>
            <person name="Richardson P."/>
        </authorList>
    </citation>
    <scope>NUCLEOTIDE SEQUENCE [LARGE SCALE GENOMIC DNA]</scope>
    <source>
        <strain>DSM 22248 / JCM 15807 / FRC-32</strain>
    </source>
</reference>
<evidence type="ECO:0000255" key="1">
    <source>
        <dbReference type="HAMAP-Rule" id="MF_00067"/>
    </source>
</evidence>
<comment type="function">
    <text evidence="1">Catalyzes the isomerization of sedoheptulose 7-phosphate in D-glycero-D-manno-heptose 7-phosphate.</text>
</comment>
<comment type="catalytic activity">
    <reaction evidence="1">
        <text>2 D-sedoheptulose 7-phosphate = D-glycero-alpha-D-manno-heptose 7-phosphate + D-glycero-beta-D-manno-heptose 7-phosphate</text>
        <dbReference type="Rhea" id="RHEA:27489"/>
        <dbReference type="ChEBI" id="CHEBI:57483"/>
        <dbReference type="ChEBI" id="CHEBI:60203"/>
        <dbReference type="ChEBI" id="CHEBI:60204"/>
        <dbReference type="EC" id="5.3.1.28"/>
    </reaction>
</comment>
<comment type="cofactor">
    <cofactor evidence="1">
        <name>Zn(2+)</name>
        <dbReference type="ChEBI" id="CHEBI:29105"/>
    </cofactor>
    <text evidence="1">Binds 1 zinc ion per subunit.</text>
</comment>
<comment type="pathway">
    <text evidence="1">Carbohydrate biosynthesis; D-glycero-D-manno-heptose 7-phosphate biosynthesis; D-glycero-alpha-D-manno-heptose 7-phosphate and D-glycero-beta-D-manno-heptose 7-phosphate from sedoheptulose 7-phosphate: step 1/1.</text>
</comment>
<comment type="subunit">
    <text evidence="1">Homotetramer.</text>
</comment>
<comment type="subcellular location">
    <subcellularLocation>
        <location evidence="1">Cytoplasm</location>
    </subcellularLocation>
</comment>
<comment type="miscellaneous">
    <text evidence="1">The reaction produces a racemic mixture of D-glycero-alpha-D-manno-heptose 7-phosphate and D-glycero-beta-D-manno-heptose 7-phosphate.</text>
</comment>
<comment type="similarity">
    <text evidence="1">Belongs to the SIS family. GmhA subfamily.</text>
</comment>
<organism>
    <name type="scientific">Geotalea daltonii (strain DSM 22248 / JCM 15807 / FRC-32)</name>
    <name type="common">Geobacter daltonii</name>
    <dbReference type="NCBI Taxonomy" id="316067"/>
    <lineage>
        <taxon>Bacteria</taxon>
        <taxon>Pseudomonadati</taxon>
        <taxon>Thermodesulfobacteriota</taxon>
        <taxon>Desulfuromonadia</taxon>
        <taxon>Geobacterales</taxon>
        <taxon>Geobacteraceae</taxon>
        <taxon>Geotalea</taxon>
    </lineage>
</organism>
<feature type="chain" id="PRO_1000197006" description="Phosphoheptose isomerase">
    <location>
        <begin position="1"/>
        <end position="192"/>
    </location>
</feature>
<feature type="domain" description="SIS" evidence="1">
    <location>
        <begin position="34"/>
        <end position="192"/>
    </location>
</feature>
<feature type="binding site" evidence="1">
    <location>
        <begin position="49"/>
        <end position="51"/>
    </location>
    <ligand>
        <name>substrate</name>
    </ligand>
</feature>
<feature type="binding site" evidence="1">
    <location>
        <position position="58"/>
    </location>
    <ligand>
        <name>Zn(2+)</name>
        <dbReference type="ChEBI" id="CHEBI:29105"/>
    </ligand>
</feature>
<feature type="binding site" evidence="1">
    <location>
        <position position="62"/>
    </location>
    <ligand>
        <name>substrate</name>
    </ligand>
</feature>
<feature type="binding site" evidence="1">
    <location>
        <position position="62"/>
    </location>
    <ligand>
        <name>Zn(2+)</name>
        <dbReference type="ChEBI" id="CHEBI:29105"/>
    </ligand>
</feature>
<feature type="binding site" evidence="1">
    <location>
        <begin position="91"/>
        <end position="92"/>
    </location>
    <ligand>
        <name>substrate</name>
    </ligand>
</feature>
<feature type="binding site" evidence="1">
    <location>
        <begin position="117"/>
        <end position="119"/>
    </location>
    <ligand>
        <name>substrate</name>
    </ligand>
</feature>
<feature type="binding site" evidence="1">
    <location>
        <position position="122"/>
    </location>
    <ligand>
        <name>substrate</name>
    </ligand>
</feature>
<feature type="binding site" evidence="1">
    <location>
        <position position="169"/>
    </location>
    <ligand>
        <name>substrate</name>
    </ligand>
</feature>
<feature type="binding site" evidence="1">
    <location>
        <position position="169"/>
    </location>
    <ligand>
        <name>Zn(2+)</name>
        <dbReference type="ChEBI" id="CHEBI:29105"/>
    </ligand>
</feature>
<feature type="binding site" evidence="1">
    <location>
        <position position="177"/>
    </location>
    <ligand>
        <name>Zn(2+)</name>
        <dbReference type="ChEBI" id="CHEBI:29105"/>
    </ligand>
</feature>
<proteinExistence type="inferred from homology"/>
<gene>
    <name evidence="1" type="primary">gmhA</name>
    <name type="ordered locus">Geob_3483</name>
</gene>
<dbReference type="EC" id="5.3.1.28" evidence="1"/>
<dbReference type="EMBL" id="CP001390">
    <property type="protein sequence ID" value="ACM21826.1"/>
    <property type="molecule type" value="Genomic_DNA"/>
</dbReference>
<dbReference type="RefSeq" id="WP_012648554.1">
    <property type="nucleotide sequence ID" value="NC_011979.1"/>
</dbReference>
<dbReference type="SMR" id="B9M5R7"/>
<dbReference type="STRING" id="316067.Geob_3483"/>
<dbReference type="KEGG" id="geo:Geob_3483"/>
<dbReference type="eggNOG" id="COG0279">
    <property type="taxonomic scope" value="Bacteria"/>
</dbReference>
<dbReference type="HOGENOM" id="CLU_080999_4_0_7"/>
<dbReference type="OrthoDB" id="9810929at2"/>
<dbReference type="UniPathway" id="UPA00041">
    <property type="reaction ID" value="UER00436"/>
</dbReference>
<dbReference type="Proteomes" id="UP000007721">
    <property type="component" value="Chromosome"/>
</dbReference>
<dbReference type="GO" id="GO:0005737">
    <property type="term" value="C:cytoplasm"/>
    <property type="evidence" value="ECO:0007669"/>
    <property type="project" value="UniProtKB-SubCell"/>
</dbReference>
<dbReference type="GO" id="GO:0097367">
    <property type="term" value="F:carbohydrate derivative binding"/>
    <property type="evidence" value="ECO:0007669"/>
    <property type="project" value="InterPro"/>
</dbReference>
<dbReference type="GO" id="GO:0008968">
    <property type="term" value="F:D-sedoheptulose 7-phosphate isomerase activity"/>
    <property type="evidence" value="ECO:0007669"/>
    <property type="project" value="UniProtKB-UniRule"/>
</dbReference>
<dbReference type="GO" id="GO:0008270">
    <property type="term" value="F:zinc ion binding"/>
    <property type="evidence" value="ECO:0007669"/>
    <property type="project" value="UniProtKB-UniRule"/>
</dbReference>
<dbReference type="GO" id="GO:0005975">
    <property type="term" value="P:carbohydrate metabolic process"/>
    <property type="evidence" value="ECO:0007669"/>
    <property type="project" value="UniProtKB-UniRule"/>
</dbReference>
<dbReference type="GO" id="GO:2001061">
    <property type="term" value="P:D-glycero-D-manno-heptose 7-phosphate biosynthetic process"/>
    <property type="evidence" value="ECO:0007669"/>
    <property type="project" value="UniProtKB-UniPathway"/>
</dbReference>
<dbReference type="CDD" id="cd05006">
    <property type="entry name" value="SIS_GmhA"/>
    <property type="match status" value="1"/>
</dbReference>
<dbReference type="Gene3D" id="3.40.50.10490">
    <property type="entry name" value="Glucose-6-phosphate isomerase like protein, domain 1"/>
    <property type="match status" value="1"/>
</dbReference>
<dbReference type="HAMAP" id="MF_00067">
    <property type="entry name" value="GmhA"/>
    <property type="match status" value="1"/>
</dbReference>
<dbReference type="InterPro" id="IPR035461">
    <property type="entry name" value="GmhA/DiaA"/>
</dbReference>
<dbReference type="InterPro" id="IPR004515">
    <property type="entry name" value="Phosphoheptose_Isoase"/>
</dbReference>
<dbReference type="InterPro" id="IPR001347">
    <property type="entry name" value="SIS_dom"/>
</dbReference>
<dbReference type="InterPro" id="IPR046348">
    <property type="entry name" value="SIS_dom_sf"/>
</dbReference>
<dbReference type="InterPro" id="IPR050099">
    <property type="entry name" value="SIS_GmhA/DiaA_subfam"/>
</dbReference>
<dbReference type="NCBIfam" id="TIGR00441">
    <property type="entry name" value="gmhA"/>
    <property type="match status" value="1"/>
</dbReference>
<dbReference type="PANTHER" id="PTHR30390:SF6">
    <property type="entry name" value="DNAA INITIATOR-ASSOCIATING PROTEIN DIAA"/>
    <property type="match status" value="1"/>
</dbReference>
<dbReference type="PANTHER" id="PTHR30390">
    <property type="entry name" value="SEDOHEPTULOSE 7-PHOSPHATE ISOMERASE / DNAA INITIATOR-ASSOCIATING FACTOR FOR REPLICATION INITIATION"/>
    <property type="match status" value="1"/>
</dbReference>
<dbReference type="Pfam" id="PF13580">
    <property type="entry name" value="SIS_2"/>
    <property type="match status" value="1"/>
</dbReference>
<dbReference type="SUPFAM" id="SSF53697">
    <property type="entry name" value="SIS domain"/>
    <property type="match status" value="1"/>
</dbReference>
<dbReference type="PROSITE" id="PS51464">
    <property type="entry name" value="SIS"/>
    <property type="match status" value="1"/>
</dbReference>
<keyword id="KW-0119">Carbohydrate metabolism</keyword>
<keyword id="KW-0963">Cytoplasm</keyword>
<keyword id="KW-0413">Isomerase</keyword>
<keyword id="KW-0479">Metal-binding</keyword>
<keyword id="KW-1185">Reference proteome</keyword>
<keyword id="KW-0862">Zinc</keyword>
<name>GMHA_GEODF</name>
<accession>B9M5R7</accession>